<protein>
    <recommendedName>
        <fullName evidence="2">Galactokinase</fullName>
        <ecNumber evidence="2">2.7.1.6</ecNumber>
    </recommendedName>
    <alternativeName>
        <fullName evidence="2">Galactose kinase</fullName>
    </alternativeName>
</protein>
<keyword id="KW-0067">ATP-binding</keyword>
<keyword id="KW-0119">Carbohydrate metabolism</keyword>
<keyword id="KW-0963">Cytoplasm</keyword>
<keyword id="KW-0299">Galactose metabolism</keyword>
<keyword id="KW-0418">Kinase</keyword>
<keyword id="KW-0460">Magnesium</keyword>
<keyword id="KW-0479">Metal-binding</keyword>
<keyword id="KW-0547">Nucleotide-binding</keyword>
<keyword id="KW-1185">Reference proteome</keyword>
<keyword id="KW-0808">Transferase</keyword>
<proteinExistence type="inferred from homology"/>
<gene>
    <name evidence="2" type="primary">galK</name>
    <name type="ordered locus">c0833</name>
</gene>
<comment type="function">
    <text evidence="2">Catalyzes the transfer of the gamma-phosphate of ATP to D-galactose to form alpha-D-galactose-1-phosphate (Gal-1-P).</text>
</comment>
<comment type="catalytic activity">
    <reaction evidence="2">
        <text>alpha-D-galactose + ATP = alpha-D-galactose 1-phosphate + ADP + H(+)</text>
        <dbReference type="Rhea" id="RHEA:13553"/>
        <dbReference type="ChEBI" id="CHEBI:15378"/>
        <dbReference type="ChEBI" id="CHEBI:28061"/>
        <dbReference type="ChEBI" id="CHEBI:30616"/>
        <dbReference type="ChEBI" id="CHEBI:58336"/>
        <dbReference type="ChEBI" id="CHEBI:456216"/>
        <dbReference type="EC" id="2.7.1.6"/>
    </reaction>
</comment>
<comment type="pathway">
    <text evidence="2">Carbohydrate metabolism; galactose metabolism.</text>
</comment>
<comment type="subcellular location">
    <subcellularLocation>
        <location evidence="2">Cytoplasm</location>
    </subcellularLocation>
</comment>
<comment type="similarity">
    <text evidence="2">Belongs to the GHMP kinase family. GalK subfamily.</text>
</comment>
<name>GAL1_ECOL6</name>
<dbReference type="EC" id="2.7.1.6" evidence="2"/>
<dbReference type="EMBL" id="AE014075">
    <property type="protein sequence ID" value="AAN79306.1"/>
    <property type="molecule type" value="Genomic_DNA"/>
</dbReference>
<dbReference type="RefSeq" id="WP_000053414.1">
    <property type="nucleotide sequence ID" value="NZ_CP051263.1"/>
</dbReference>
<dbReference type="SMR" id="Q8FJS1"/>
<dbReference type="STRING" id="199310.c0833"/>
<dbReference type="KEGG" id="ecc:c0833"/>
<dbReference type="eggNOG" id="COG0153">
    <property type="taxonomic scope" value="Bacteria"/>
</dbReference>
<dbReference type="HOGENOM" id="CLU_017814_2_1_6"/>
<dbReference type="BioCyc" id="ECOL199310:C0833-MONOMER"/>
<dbReference type="UniPathway" id="UPA00214"/>
<dbReference type="Proteomes" id="UP000001410">
    <property type="component" value="Chromosome"/>
</dbReference>
<dbReference type="GO" id="GO:0005829">
    <property type="term" value="C:cytosol"/>
    <property type="evidence" value="ECO:0007669"/>
    <property type="project" value="TreeGrafter"/>
</dbReference>
<dbReference type="GO" id="GO:0005524">
    <property type="term" value="F:ATP binding"/>
    <property type="evidence" value="ECO:0007669"/>
    <property type="project" value="UniProtKB-UniRule"/>
</dbReference>
<dbReference type="GO" id="GO:0004335">
    <property type="term" value="F:galactokinase activity"/>
    <property type="evidence" value="ECO:0007669"/>
    <property type="project" value="UniProtKB-UniRule"/>
</dbReference>
<dbReference type="GO" id="GO:0000287">
    <property type="term" value="F:magnesium ion binding"/>
    <property type="evidence" value="ECO:0007669"/>
    <property type="project" value="UniProtKB-UniRule"/>
</dbReference>
<dbReference type="GO" id="GO:0006012">
    <property type="term" value="P:galactose metabolic process"/>
    <property type="evidence" value="ECO:0007669"/>
    <property type="project" value="UniProtKB-UniRule"/>
</dbReference>
<dbReference type="FunFam" id="3.30.230.10:FF:000017">
    <property type="entry name" value="Galactokinase"/>
    <property type="match status" value="1"/>
</dbReference>
<dbReference type="FunFam" id="3.30.70.890:FF:000001">
    <property type="entry name" value="Galactokinase"/>
    <property type="match status" value="1"/>
</dbReference>
<dbReference type="Gene3D" id="3.30.230.10">
    <property type="match status" value="1"/>
</dbReference>
<dbReference type="Gene3D" id="3.30.70.890">
    <property type="entry name" value="GHMP kinase, C-terminal domain"/>
    <property type="match status" value="1"/>
</dbReference>
<dbReference type="HAMAP" id="MF_00246">
    <property type="entry name" value="Galactokinase"/>
    <property type="match status" value="1"/>
</dbReference>
<dbReference type="InterPro" id="IPR000705">
    <property type="entry name" value="Galactokinase"/>
</dbReference>
<dbReference type="InterPro" id="IPR022963">
    <property type="entry name" value="Galactokinase_bac"/>
</dbReference>
<dbReference type="InterPro" id="IPR019741">
    <property type="entry name" value="Galactokinase_CS"/>
</dbReference>
<dbReference type="InterPro" id="IPR019539">
    <property type="entry name" value="GalKase_N"/>
</dbReference>
<dbReference type="InterPro" id="IPR013750">
    <property type="entry name" value="GHMP_kinase_C_dom"/>
</dbReference>
<dbReference type="InterPro" id="IPR036554">
    <property type="entry name" value="GHMP_kinase_C_sf"/>
</dbReference>
<dbReference type="InterPro" id="IPR006204">
    <property type="entry name" value="GHMP_kinase_N_dom"/>
</dbReference>
<dbReference type="InterPro" id="IPR006203">
    <property type="entry name" value="GHMP_knse_ATP-bd_CS"/>
</dbReference>
<dbReference type="InterPro" id="IPR006206">
    <property type="entry name" value="Mevalonate/galactokinase"/>
</dbReference>
<dbReference type="InterPro" id="IPR020568">
    <property type="entry name" value="Ribosomal_Su5_D2-typ_SF"/>
</dbReference>
<dbReference type="InterPro" id="IPR014721">
    <property type="entry name" value="Ribsml_uS5_D2-typ_fold_subgr"/>
</dbReference>
<dbReference type="NCBIfam" id="TIGR00131">
    <property type="entry name" value="gal_kin"/>
    <property type="match status" value="1"/>
</dbReference>
<dbReference type="NCBIfam" id="NF003472">
    <property type="entry name" value="PRK05101.1"/>
    <property type="match status" value="1"/>
</dbReference>
<dbReference type="PANTHER" id="PTHR10457:SF7">
    <property type="entry name" value="GALACTOKINASE-RELATED"/>
    <property type="match status" value="1"/>
</dbReference>
<dbReference type="PANTHER" id="PTHR10457">
    <property type="entry name" value="MEVALONATE KINASE/GALACTOKINASE"/>
    <property type="match status" value="1"/>
</dbReference>
<dbReference type="Pfam" id="PF10509">
    <property type="entry name" value="GalKase_gal_bdg"/>
    <property type="match status" value="1"/>
</dbReference>
<dbReference type="Pfam" id="PF08544">
    <property type="entry name" value="GHMP_kinases_C"/>
    <property type="match status" value="1"/>
</dbReference>
<dbReference type="Pfam" id="PF00288">
    <property type="entry name" value="GHMP_kinases_N"/>
    <property type="match status" value="1"/>
</dbReference>
<dbReference type="PIRSF" id="PIRSF000530">
    <property type="entry name" value="Galactokinase"/>
    <property type="match status" value="1"/>
</dbReference>
<dbReference type="PRINTS" id="PR00473">
    <property type="entry name" value="GALCTOKINASE"/>
</dbReference>
<dbReference type="PRINTS" id="PR00959">
    <property type="entry name" value="MEVGALKINASE"/>
</dbReference>
<dbReference type="SUPFAM" id="SSF55060">
    <property type="entry name" value="GHMP Kinase, C-terminal domain"/>
    <property type="match status" value="1"/>
</dbReference>
<dbReference type="SUPFAM" id="SSF54211">
    <property type="entry name" value="Ribosomal protein S5 domain 2-like"/>
    <property type="match status" value="1"/>
</dbReference>
<dbReference type="PROSITE" id="PS00106">
    <property type="entry name" value="GALACTOKINASE"/>
    <property type="match status" value="1"/>
</dbReference>
<dbReference type="PROSITE" id="PS00627">
    <property type="entry name" value="GHMP_KINASES_ATP"/>
    <property type="match status" value="1"/>
</dbReference>
<feature type="initiator methionine" description="Removed" evidence="1">
    <location>
        <position position="1"/>
    </location>
</feature>
<feature type="chain" id="PRO_0000184609" description="Galactokinase">
    <location>
        <begin position="2"/>
        <end position="382"/>
    </location>
</feature>
<feature type="active site" description="Proton acceptor" evidence="2">
    <location>
        <position position="174"/>
    </location>
</feature>
<feature type="binding site" evidence="2">
    <location>
        <begin position="34"/>
        <end position="37"/>
    </location>
    <ligand>
        <name>substrate</name>
    </ligand>
</feature>
<feature type="binding site" evidence="2">
    <location>
        <begin position="124"/>
        <end position="130"/>
    </location>
    <ligand>
        <name>ATP</name>
        <dbReference type="ChEBI" id="CHEBI:30616"/>
    </ligand>
</feature>
<feature type="binding site" evidence="2">
    <location>
        <position position="130"/>
    </location>
    <ligand>
        <name>Mg(2+)</name>
        <dbReference type="ChEBI" id="CHEBI:18420"/>
    </ligand>
</feature>
<feature type="binding site" evidence="2">
    <location>
        <position position="162"/>
    </location>
    <ligand>
        <name>Mg(2+)</name>
        <dbReference type="ChEBI" id="CHEBI:18420"/>
    </ligand>
</feature>
<feature type="binding site" evidence="2">
    <location>
        <position position="223"/>
    </location>
    <ligand>
        <name>substrate</name>
    </ligand>
</feature>
<feature type="site" description="Transition state stabilizer" evidence="2">
    <location>
        <position position="28"/>
    </location>
</feature>
<evidence type="ECO:0000250" key="1"/>
<evidence type="ECO:0000255" key="2">
    <source>
        <dbReference type="HAMAP-Rule" id="MF_00246"/>
    </source>
</evidence>
<reference key="1">
    <citation type="journal article" date="2002" name="Proc. Natl. Acad. Sci. U.S.A.">
        <title>Extensive mosaic structure revealed by the complete genome sequence of uropathogenic Escherichia coli.</title>
        <authorList>
            <person name="Welch R.A."/>
            <person name="Burland V."/>
            <person name="Plunkett G. III"/>
            <person name="Redford P."/>
            <person name="Roesch P."/>
            <person name="Rasko D."/>
            <person name="Buckles E.L."/>
            <person name="Liou S.-R."/>
            <person name="Boutin A."/>
            <person name="Hackett J."/>
            <person name="Stroud D."/>
            <person name="Mayhew G.F."/>
            <person name="Rose D.J."/>
            <person name="Zhou S."/>
            <person name="Schwartz D.C."/>
            <person name="Perna N.T."/>
            <person name="Mobley H.L.T."/>
            <person name="Donnenberg M.S."/>
            <person name="Blattner F.R."/>
        </authorList>
    </citation>
    <scope>NUCLEOTIDE SEQUENCE [LARGE SCALE GENOMIC DNA]</scope>
    <source>
        <strain>CFT073 / ATCC 700928 / UPEC</strain>
    </source>
</reference>
<organism>
    <name type="scientific">Escherichia coli O6:H1 (strain CFT073 / ATCC 700928 / UPEC)</name>
    <dbReference type="NCBI Taxonomy" id="199310"/>
    <lineage>
        <taxon>Bacteria</taxon>
        <taxon>Pseudomonadati</taxon>
        <taxon>Pseudomonadota</taxon>
        <taxon>Gammaproteobacteria</taxon>
        <taxon>Enterobacterales</taxon>
        <taxon>Enterobacteriaceae</taxon>
        <taxon>Escherichia</taxon>
    </lineage>
</organism>
<accession>Q8FJS1</accession>
<sequence>MSLKEKTQSLFANAFGYPATHTIQAPGRVNLIGEHTDYNDGFVLPCAIDYQTVISCAPRDDRKVRVMAADYENQLDEFSLDAPIVAHENYQWANYVRGVVKHLQLRNNSFGGVDMVISGNVPQGAGLSSSASLEVAVGTVLQQLYHLPLDGAQIALNGQEAENQFVGCNCGIMDQLISALGKKDHALLIDCRSLGTKAVSMPKGVAVVIINSNFKRTLVGSEYNTRREQCETGARFFQQPALRDVTIEEFNAVAHELDPIVAKRVRHILTENARTVEAASALEQGDLKRMGELMAESHASMRDDFEITVPQIDTLVEIVKAVIGDKGGVRMTGGGFGGCIVALFPEELVPAVQQAVAEQYEAKTGIKETFYVCKPSQGAGQC</sequence>